<protein>
    <recommendedName>
        <fullName evidence="1">Small ribosomal subunit protein uS4</fullName>
    </recommendedName>
    <alternativeName>
        <fullName evidence="2">30S ribosomal protein S4</fullName>
    </alternativeName>
</protein>
<comment type="function">
    <text evidence="1">One of the primary rRNA binding proteins, it binds directly to 16S rRNA where it nucleates assembly of the body of the 30S subunit.</text>
</comment>
<comment type="function">
    <text evidence="1">With S5 and S12 plays an important role in translational accuracy.</text>
</comment>
<comment type="subunit">
    <text evidence="1">Part of the 30S ribosomal subunit. Contacts protein S5. The interaction surface between S4 and S5 is involved in control of translational fidelity.</text>
</comment>
<comment type="similarity">
    <text evidence="1">Belongs to the universal ribosomal protein uS4 family.</text>
</comment>
<accession>Q2IJ65</accession>
<proteinExistence type="inferred from homology"/>
<name>RS4_ANADE</name>
<gene>
    <name evidence="1" type="primary">rpsD</name>
    <name type="ordered locus">Adeh_1920</name>
</gene>
<organism>
    <name type="scientific">Anaeromyxobacter dehalogenans (strain 2CP-C)</name>
    <dbReference type="NCBI Taxonomy" id="290397"/>
    <lineage>
        <taxon>Bacteria</taxon>
        <taxon>Pseudomonadati</taxon>
        <taxon>Myxococcota</taxon>
        <taxon>Myxococcia</taxon>
        <taxon>Myxococcales</taxon>
        <taxon>Cystobacterineae</taxon>
        <taxon>Anaeromyxobacteraceae</taxon>
        <taxon>Anaeromyxobacter</taxon>
    </lineage>
</organism>
<dbReference type="EMBL" id="CP000251">
    <property type="protein sequence ID" value="ABC81691.1"/>
    <property type="molecule type" value="Genomic_DNA"/>
</dbReference>
<dbReference type="RefSeq" id="WP_011420974.1">
    <property type="nucleotide sequence ID" value="NC_007760.1"/>
</dbReference>
<dbReference type="SMR" id="Q2IJ65"/>
<dbReference type="STRING" id="290397.Adeh_1920"/>
<dbReference type="KEGG" id="ade:Adeh_1920"/>
<dbReference type="eggNOG" id="COG0522">
    <property type="taxonomic scope" value="Bacteria"/>
</dbReference>
<dbReference type="HOGENOM" id="CLU_092403_0_2_7"/>
<dbReference type="OrthoDB" id="9803672at2"/>
<dbReference type="Proteomes" id="UP000001935">
    <property type="component" value="Chromosome"/>
</dbReference>
<dbReference type="GO" id="GO:0015935">
    <property type="term" value="C:small ribosomal subunit"/>
    <property type="evidence" value="ECO:0007669"/>
    <property type="project" value="InterPro"/>
</dbReference>
<dbReference type="GO" id="GO:0019843">
    <property type="term" value="F:rRNA binding"/>
    <property type="evidence" value="ECO:0007669"/>
    <property type="project" value="UniProtKB-UniRule"/>
</dbReference>
<dbReference type="GO" id="GO:0003735">
    <property type="term" value="F:structural constituent of ribosome"/>
    <property type="evidence" value="ECO:0007669"/>
    <property type="project" value="InterPro"/>
</dbReference>
<dbReference type="GO" id="GO:0042274">
    <property type="term" value="P:ribosomal small subunit biogenesis"/>
    <property type="evidence" value="ECO:0007669"/>
    <property type="project" value="TreeGrafter"/>
</dbReference>
<dbReference type="GO" id="GO:0006412">
    <property type="term" value="P:translation"/>
    <property type="evidence" value="ECO:0007669"/>
    <property type="project" value="UniProtKB-UniRule"/>
</dbReference>
<dbReference type="CDD" id="cd00165">
    <property type="entry name" value="S4"/>
    <property type="match status" value="1"/>
</dbReference>
<dbReference type="FunFam" id="1.10.1050.10:FF:000001">
    <property type="entry name" value="30S ribosomal protein S4"/>
    <property type="match status" value="1"/>
</dbReference>
<dbReference type="FunFam" id="3.10.290.10:FF:000001">
    <property type="entry name" value="30S ribosomal protein S4"/>
    <property type="match status" value="1"/>
</dbReference>
<dbReference type="Gene3D" id="1.10.1050.10">
    <property type="entry name" value="Ribosomal Protein S4 Delta 41, Chain A, domain 1"/>
    <property type="match status" value="1"/>
</dbReference>
<dbReference type="Gene3D" id="3.10.290.10">
    <property type="entry name" value="RNA-binding S4 domain"/>
    <property type="match status" value="1"/>
</dbReference>
<dbReference type="HAMAP" id="MF_01306_B">
    <property type="entry name" value="Ribosomal_uS4_B"/>
    <property type="match status" value="1"/>
</dbReference>
<dbReference type="InterPro" id="IPR022801">
    <property type="entry name" value="Ribosomal_uS4"/>
</dbReference>
<dbReference type="InterPro" id="IPR005709">
    <property type="entry name" value="Ribosomal_uS4_bac-type"/>
</dbReference>
<dbReference type="InterPro" id="IPR018079">
    <property type="entry name" value="Ribosomal_uS4_CS"/>
</dbReference>
<dbReference type="InterPro" id="IPR001912">
    <property type="entry name" value="Ribosomal_uS4_N"/>
</dbReference>
<dbReference type="InterPro" id="IPR002942">
    <property type="entry name" value="S4_RNA-bd"/>
</dbReference>
<dbReference type="InterPro" id="IPR036986">
    <property type="entry name" value="S4_RNA-bd_sf"/>
</dbReference>
<dbReference type="NCBIfam" id="NF003717">
    <property type="entry name" value="PRK05327.1"/>
    <property type="match status" value="1"/>
</dbReference>
<dbReference type="NCBIfam" id="TIGR01017">
    <property type="entry name" value="rpsD_bact"/>
    <property type="match status" value="1"/>
</dbReference>
<dbReference type="PANTHER" id="PTHR11831">
    <property type="entry name" value="30S 40S RIBOSOMAL PROTEIN"/>
    <property type="match status" value="1"/>
</dbReference>
<dbReference type="PANTHER" id="PTHR11831:SF4">
    <property type="entry name" value="SMALL RIBOSOMAL SUBUNIT PROTEIN US4M"/>
    <property type="match status" value="1"/>
</dbReference>
<dbReference type="Pfam" id="PF00163">
    <property type="entry name" value="Ribosomal_S4"/>
    <property type="match status" value="1"/>
</dbReference>
<dbReference type="Pfam" id="PF01479">
    <property type="entry name" value="S4"/>
    <property type="match status" value="1"/>
</dbReference>
<dbReference type="SMART" id="SM01390">
    <property type="entry name" value="Ribosomal_S4"/>
    <property type="match status" value="1"/>
</dbReference>
<dbReference type="SMART" id="SM00363">
    <property type="entry name" value="S4"/>
    <property type="match status" value="1"/>
</dbReference>
<dbReference type="SUPFAM" id="SSF55174">
    <property type="entry name" value="Alpha-L RNA-binding motif"/>
    <property type="match status" value="1"/>
</dbReference>
<dbReference type="PROSITE" id="PS00632">
    <property type="entry name" value="RIBOSOMAL_S4"/>
    <property type="match status" value="1"/>
</dbReference>
<dbReference type="PROSITE" id="PS50889">
    <property type="entry name" value="S4"/>
    <property type="match status" value="1"/>
</dbReference>
<keyword id="KW-1185">Reference proteome</keyword>
<keyword id="KW-0687">Ribonucleoprotein</keyword>
<keyword id="KW-0689">Ribosomal protein</keyword>
<keyword id="KW-0694">RNA-binding</keyword>
<keyword id="KW-0699">rRNA-binding</keyword>
<feature type="chain" id="PRO_0000293234" description="Small ribosomal subunit protein uS4">
    <location>
        <begin position="1"/>
        <end position="208"/>
    </location>
</feature>
<feature type="domain" description="S4 RNA-binding" evidence="1">
    <location>
        <begin position="98"/>
        <end position="159"/>
    </location>
</feature>
<evidence type="ECO:0000255" key="1">
    <source>
        <dbReference type="HAMAP-Rule" id="MF_01306"/>
    </source>
</evidence>
<evidence type="ECO:0000305" key="2"/>
<reference key="1">
    <citation type="submission" date="2006-01" db="EMBL/GenBank/DDBJ databases">
        <title>Complete sequence of Anaeromyxobacter dehalogenans 2CP-C.</title>
        <authorList>
            <person name="Copeland A."/>
            <person name="Lucas S."/>
            <person name="Lapidus A."/>
            <person name="Barry K."/>
            <person name="Detter J.C."/>
            <person name="Glavina T."/>
            <person name="Hammon N."/>
            <person name="Israni S."/>
            <person name="Pitluck S."/>
            <person name="Brettin T."/>
            <person name="Bruce D."/>
            <person name="Han C."/>
            <person name="Tapia R."/>
            <person name="Gilna P."/>
            <person name="Kiss H."/>
            <person name="Schmutz J."/>
            <person name="Larimer F."/>
            <person name="Land M."/>
            <person name="Kyrpides N."/>
            <person name="Anderson I."/>
            <person name="Sanford R.A."/>
            <person name="Ritalahti K.M."/>
            <person name="Thomas H.S."/>
            <person name="Kirby J.R."/>
            <person name="Zhulin I.B."/>
            <person name="Loeffler F.E."/>
            <person name="Richardson P."/>
        </authorList>
    </citation>
    <scope>NUCLEOTIDE SEQUENCE [LARGE SCALE GENOMIC DNA]</scope>
    <source>
        <strain>2CP-C</strain>
    </source>
</reference>
<sequence length="208" mass="23903">MARYSESVCRLCRRENLKMYLKGDRCYTDKCAIERRPYPPGQHGQGRTKFSEYGVQLREKQKVKRMYGLLEAGFRHAYQNAAAAKGKTGENLLQTLELRLDNVVFRLGFADTRNEARQLVRHGHFKVNGRKVNIPSYLCRPGDKVELKDRSKKVVRITEALEAVDRRGVPAWLDLDKGGFKGTVKTSPAREDITMPIQEQLIVELYSK</sequence>